<reference key="1">
    <citation type="submission" date="2005-03" db="EMBL/GenBank/DDBJ databases">
        <title>Brevibacillus brevis strain 47, complete genome.</title>
        <authorList>
            <person name="Hosoyama A."/>
            <person name="Yamada R."/>
            <person name="Hongo Y."/>
            <person name="Terui Y."/>
            <person name="Ankai A."/>
            <person name="Masuyama W."/>
            <person name="Sekiguchi M."/>
            <person name="Takeda T."/>
            <person name="Asano K."/>
            <person name="Ohji S."/>
            <person name="Ichikawa N."/>
            <person name="Narita S."/>
            <person name="Aoki N."/>
            <person name="Miura H."/>
            <person name="Matsushita S."/>
            <person name="Sekigawa T."/>
            <person name="Yamagata H."/>
            <person name="Yoshikawa H."/>
            <person name="Udaka S."/>
            <person name="Tanikawa S."/>
            <person name="Fujita N."/>
        </authorList>
    </citation>
    <scope>NUCLEOTIDE SEQUENCE [LARGE SCALE GENOMIC DNA]</scope>
    <source>
        <strain>47 / JCM 6285 / NBRC 100599</strain>
    </source>
</reference>
<proteinExistence type="inferred from homology"/>
<evidence type="ECO:0000255" key="1">
    <source>
        <dbReference type="HAMAP-Rule" id="MF_00564"/>
    </source>
</evidence>
<keyword id="KW-0548">Nucleotidyltransferase</keyword>
<keyword id="KW-1185">Reference proteome</keyword>
<keyword id="KW-0694">RNA-binding</keyword>
<keyword id="KW-0698">rRNA processing</keyword>
<keyword id="KW-0808">Transferase</keyword>
<keyword id="KW-0819">tRNA processing</keyword>
<keyword id="KW-0820">tRNA-binding</keyword>
<comment type="function">
    <text evidence="1">Phosphorolytic 3'-5' exoribonuclease that plays an important role in tRNA 3'-end maturation. Removes nucleotide residues following the 3'-CCA terminus of tRNAs; can also add nucleotides to the ends of RNA molecules by using nucleoside diphosphates as substrates, but this may not be physiologically important. Probably plays a role in initiation of 16S rRNA degradation (leading to ribosome degradation) during starvation.</text>
</comment>
<comment type="catalytic activity">
    <reaction evidence="1">
        <text>tRNA(n+1) + phosphate = tRNA(n) + a ribonucleoside 5'-diphosphate</text>
        <dbReference type="Rhea" id="RHEA:10628"/>
        <dbReference type="Rhea" id="RHEA-COMP:17343"/>
        <dbReference type="Rhea" id="RHEA-COMP:17344"/>
        <dbReference type="ChEBI" id="CHEBI:43474"/>
        <dbReference type="ChEBI" id="CHEBI:57930"/>
        <dbReference type="ChEBI" id="CHEBI:173114"/>
        <dbReference type="EC" id="2.7.7.56"/>
    </reaction>
</comment>
<comment type="subunit">
    <text evidence="1">Homohexameric ring arranged as a trimer of dimers.</text>
</comment>
<comment type="similarity">
    <text evidence="1">Belongs to the RNase PH family.</text>
</comment>
<gene>
    <name evidence="1" type="primary">rph</name>
    <name type="ordered locus">BBR47_17900</name>
</gene>
<sequence length="253" mass="27383">MRVDGRAHDQLRPVTITRNYIKHAEGSCLIEVGDTKVICTATLEERVPPFMRGGGKGWITAEYSMLPRATATRNARESSKGKVGGRTMEIQRLIGRALRSVVNLEAMGERTIWLDCDVIQADGGTRTASITGAFVAMVDAMQKLVDSGTWKQLPLNDFLAATSVGVVGEEAVLDLNYKEDSTAIVDMNVVMTGKGKFVELQGTGEDAPFSPEQLQEMISLAKVGIDNLIHSQKEALADVTLSFAQSVAEESHA</sequence>
<accession>C0ZAF8</accession>
<organism>
    <name type="scientific">Brevibacillus brevis (strain 47 / JCM 6285 / NBRC 100599)</name>
    <dbReference type="NCBI Taxonomy" id="358681"/>
    <lineage>
        <taxon>Bacteria</taxon>
        <taxon>Bacillati</taxon>
        <taxon>Bacillota</taxon>
        <taxon>Bacilli</taxon>
        <taxon>Bacillales</taxon>
        <taxon>Paenibacillaceae</taxon>
        <taxon>Brevibacillus</taxon>
    </lineage>
</organism>
<protein>
    <recommendedName>
        <fullName evidence="1">Ribonuclease PH</fullName>
        <shortName evidence="1">RNase PH</shortName>
        <ecNumber evidence="1">2.7.7.56</ecNumber>
    </recommendedName>
    <alternativeName>
        <fullName evidence="1">tRNA nucleotidyltransferase</fullName>
    </alternativeName>
</protein>
<feature type="chain" id="PRO_1000194468" description="Ribonuclease PH">
    <location>
        <begin position="1"/>
        <end position="253"/>
    </location>
</feature>
<feature type="binding site" evidence="1">
    <location>
        <position position="86"/>
    </location>
    <ligand>
        <name>phosphate</name>
        <dbReference type="ChEBI" id="CHEBI:43474"/>
        <note>substrate</note>
    </ligand>
</feature>
<feature type="binding site" evidence="1">
    <location>
        <begin position="124"/>
        <end position="126"/>
    </location>
    <ligand>
        <name>phosphate</name>
        <dbReference type="ChEBI" id="CHEBI:43474"/>
        <note>substrate</note>
    </ligand>
</feature>
<dbReference type="EC" id="2.7.7.56" evidence="1"/>
<dbReference type="EMBL" id="AP008955">
    <property type="protein sequence ID" value="BAH42767.1"/>
    <property type="molecule type" value="Genomic_DNA"/>
</dbReference>
<dbReference type="RefSeq" id="WP_012685510.1">
    <property type="nucleotide sequence ID" value="NC_012491.1"/>
</dbReference>
<dbReference type="SMR" id="C0ZAF8"/>
<dbReference type="STRING" id="358681.BBR47_17900"/>
<dbReference type="KEGG" id="bbe:BBR47_17900"/>
<dbReference type="eggNOG" id="COG0689">
    <property type="taxonomic scope" value="Bacteria"/>
</dbReference>
<dbReference type="HOGENOM" id="CLU_050858_0_0_9"/>
<dbReference type="Proteomes" id="UP000001877">
    <property type="component" value="Chromosome"/>
</dbReference>
<dbReference type="GO" id="GO:0000175">
    <property type="term" value="F:3'-5'-RNA exonuclease activity"/>
    <property type="evidence" value="ECO:0007669"/>
    <property type="project" value="UniProtKB-UniRule"/>
</dbReference>
<dbReference type="GO" id="GO:0000049">
    <property type="term" value="F:tRNA binding"/>
    <property type="evidence" value="ECO:0007669"/>
    <property type="project" value="UniProtKB-UniRule"/>
</dbReference>
<dbReference type="GO" id="GO:0009022">
    <property type="term" value="F:tRNA nucleotidyltransferase activity"/>
    <property type="evidence" value="ECO:0007669"/>
    <property type="project" value="UniProtKB-UniRule"/>
</dbReference>
<dbReference type="GO" id="GO:0016075">
    <property type="term" value="P:rRNA catabolic process"/>
    <property type="evidence" value="ECO:0007669"/>
    <property type="project" value="UniProtKB-UniRule"/>
</dbReference>
<dbReference type="GO" id="GO:0006364">
    <property type="term" value="P:rRNA processing"/>
    <property type="evidence" value="ECO:0007669"/>
    <property type="project" value="UniProtKB-KW"/>
</dbReference>
<dbReference type="GO" id="GO:0008033">
    <property type="term" value="P:tRNA processing"/>
    <property type="evidence" value="ECO:0007669"/>
    <property type="project" value="UniProtKB-UniRule"/>
</dbReference>
<dbReference type="CDD" id="cd11362">
    <property type="entry name" value="RNase_PH_bact"/>
    <property type="match status" value="1"/>
</dbReference>
<dbReference type="FunFam" id="3.30.230.70:FF:000003">
    <property type="entry name" value="Ribonuclease PH"/>
    <property type="match status" value="1"/>
</dbReference>
<dbReference type="Gene3D" id="3.30.230.70">
    <property type="entry name" value="GHMP Kinase, N-terminal domain"/>
    <property type="match status" value="1"/>
</dbReference>
<dbReference type="HAMAP" id="MF_00564">
    <property type="entry name" value="RNase_PH"/>
    <property type="match status" value="1"/>
</dbReference>
<dbReference type="InterPro" id="IPR001247">
    <property type="entry name" value="ExoRNase_PH_dom1"/>
</dbReference>
<dbReference type="InterPro" id="IPR015847">
    <property type="entry name" value="ExoRNase_PH_dom2"/>
</dbReference>
<dbReference type="InterPro" id="IPR036345">
    <property type="entry name" value="ExoRNase_PH_dom2_sf"/>
</dbReference>
<dbReference type="InterPro" id="IPR027408">
    <property type="entry name" value="PNPase/RNase_PH_dom_sf"/>
</dbReference>
<dbReference type="InterPro" id="IPR020568">
    <property type="entry name" value="Ribosomal_Su5_D2-typ_SF"/>
</dbReference>
<dbReference type="InterPro" id="IPR050080">
    <property type="entry name" value="RNase_PH"/>
</dbReference>
<dbReference type="InterPro" id="IPR002381">
    <property type="entry name" value="RNase_PH_bac-type"/>
</dbReference>
<dbReference type="InterPro" id="IPR018336">
    <property type="entry name" value="RNase_PH_CS"/>
</dbReference>
<dbReference type="NCBIfam" id="TIGR01966">
    <property type="entry name" value="RNasePH"/>
    <property type="match status" value="1"/>
</dbReference>
<dbReference type="PANTHER" id="PTHR11953">
    <property type="entry name" value="EXOSOME COMPLEX COMPONENT"/>
    <property type="match status" value="1"/>
</dbReference>
<dbReference type="PANTHER" id="PTHR11953:SF0">
    <property type="entry name" value="EXOSOME COMPLEX COMPONENT RRP41"/>
    <property type="match status" value="1"/>
</dbReference>
<dbReference type="Pfam" id="PF01138">
    <property type="entry name" value="RNase_PH"/>
    <property type="match status" value="1"/>
</dbReference>
<dbReference type="Pfam" id="PF03725">
    <property type="entry name" value="RNase_PH_C"/>
    <property type="match status" value="1"/>
</dbReference>
<dbReference type="SUPFAM" id="SSF55666">
    <property type="entry name" value="Ribonuclease PH domain 2-like"/>
    <property type="match status" value="1"/>
</dbReference>
<dbReference type="SUPFAM" id="SSF54211">
    <property type="entry name" value="Ribosomal protein S5 domain 2-like"/>
    <property type="match status" value="1"/>
</dbReference>
<dbReference type="PROSITE" id="PS01277">
    <property type="entry name" value="RIBONUCLEASE_PH"/>
    <property type="match status" value="1"/>
</dbReference>
<name>RNPH_BREBN</name>